<geneLocation type="chloroplast"/>
<accession>P05334</accession>
<dbReference type="EMBL" id="Z11874">
    <property type="protein sequence ID" value="CAA77913.1"/>
    <property type="molecule type" value="Genomic_DNA"/>
</dbReference>
<dbReference type="EMBL" id="X07073">
    <property type="protein sequence ID" value="CAA30109.1"/>
    <property type="molecule type" value="Genomic_DNA"/>
</dbReference>
<dbReference type="EMBL" id="X70810">
    <property type="protein sequence ID" value="CAA50096.1"/>
    <property type="molecule type" value="Genomic_DNA"/>
</dbReference>
<dbReference type="PIR" id="S00690">
    <property type="entry name" value="S00690"/>
</dbReference>
<dbReference type="RefSeq" id="NP_041909.1">
    <property type="nucleotide sequence ID" value="NC_001603.2"/>
</dbReference>
<dbReference type="SMR" id="P05334"/>
<dbReference type="GeneID" id="807507"/>
<dbReference type="GO" id="GO:0009535">
    <property type="term" value="C:chloroplast thylakoid membrane"/>
    <property type="evidence" value="ECO:0007669"/>
    <property type="project" value="UniProtKB-SubCell"/>
</dbReference>
<dbReference type="GO" id="GO:0009539">
    <property type="term" value="C:photosystem II reaction center"/>
    <property type="evidence" value="ECO:0007669"/>
    <property type="project" value="InterPro"/>
</dbReference>
<dbReference type="GO" id="GO:0009055">
    <property type="term" value="F:electron transfer activity"/>
    <property type="evidence" value="ECO:0007669"/>
    <property type="project" value="UniProtKB-UniRule"/>
</dbReference>
<dbReference type="GO" id="GO:0020037">
    <property type="term" value="F:heme binding"/>
    <property type="evidence" value="ECO:0007669"/>
    <property type="project" value="InterPro"/>
</dbReference>
<dbReference type="GO" id="GO:0005506">
    <property type="term" value="F:iron ion binding"/>
    <property type="evidence" value="ECO:0007669"/>
    <property type="project" value="UniProtKB-UniRule"/>
</dbReference>
<dbReference type="GO" id="GO:0009767">
    <property type="term" value="P:photosynthetic electron transport chain"/>
    <property type="evidence" value="ECO:0007669"/>
    <property type="project" value="InterPro"/>
</dbReference>
<dbReference type="HAMAP" id="MF_00643">
    <property type="entry name" value="PSII_PsbF"/>
    <property type="match status" value="1"/>
</dbReference>
<dbReference type="InterPro" id="IPR006241">
    <property type="entry name" value="PSII_cyt_b559_bsu"/>
</dbReference>
<dbReference type="InterPro" id="IPR006216">
    <property type="entry name" value="PSII_cyt_b559_CS"/>
</dbReference>
<dbReference type="InterPro" id="IPR013081">
    <property type="entry name" value="PSII_cyt_b559_N"/>
</dbReference>
<dbReference type="NCBIfam" id="TIGR01333">
    <property type="entry name" value="cyt_b559_beta"/>
    <property type="match status" value="1"/>
</dbReference>
<dbReference type="Pfam" id="PF00283">
    <property type="entry name" value="Cytochrom_B559"/>
    <property type="match status" value="1"/>
</dbReference>
<dbReference type="PIRSF" id="PIRSF000037">
    <property type="entry name" value="PsbF"/>
    <property type="match status" value="1"/>
</dbReference>
<dbReference type="SUPFAM" id="SSF161045">
    <property type="entry name" value="Cytochrome b559 subunits"/>
    <property type="match status" value="1"/>
</dbReference>
<dbReference type="PROSITE" id="PS00537">
    <property type="entry name" value="CYTOCHROME_B559"/>
    <property type="match status" value="1"/>
</dbReference>
<protein>
    <recommendedName>
        <fullName evidence="1">Cytochrome b559 subunit beta</fullName>
    </recommendedName>
    <alternativeName>
        <fullName evidence="1">PSII reaction center subunit VI</fullName>
    </alternativeName>
</protein>
<comment type="function">
    <text evidence="1">This b-type cytochrome is tightly associated with the reaction center of photosystem II (PSII). PSII is a light-driven water:plastoquinone oxidoreductase that uses light energy to abstract electrons from H(2)O, generating O(2) and a proton gradient subsequently used for ATP formation. It consists of a core antenna complex that captures photons, and an electron transfer chain that converts photonic excitation into a charge separation.</text>
</comment>
<comment type="cofactor">
    <cofactor evidence="1">
        <name>heme b</name>
        <dbReference type="ChEBI" id="CHEBI:60344"/>
    </cofactor>
    <text evidence="1">With its partner (PsbE) binds heme. PSII binds additional chlorophylls, carotenoids and specific lipids.</text>
</comment>
<comment type="subunit">
    <text evidence="2">Heterodimer of an alpha subunit and a beta subunit. PSII is composed of 1 copy each of membrane proteins PsbA, PsbB, PsbC, PsbD, PsbE, PsbF, PsbH, PsbI, PsbJ, PsbK, PsbL, PsbM, PsbT, PsbY, PsbZ, Psb30/Ycf12, at least 3 peripheral proteins of the oxygen-evolving complex and a large number of cofactors. It forms dimeric complexes.</text>
</comment>
<comment type="subcellular location">
    <subcellularLocation>
        <location evidence="1">Plastid</location>
        <location evidence="1">Chloroplast thylakoid membrane</location>
        <topology evidence="1">Single-pass membrane protein</topology>
    </subcellularLocation>
</comment>
<comment type="similarity">
    <text evidence="1">Belongs to the PsbE/PsbF family.</text>
</comment>
<evidence type="ECO:0000255" key="1">
    <source>
        <dbReference type="HAMAP-Rule" id="MF_00643"/>
    </source>
</evidence>
<evidence type="ECO:0000305" key="2"/>
<reference key="1">
    <citation type="journal article" date="1988" name="Curr. Genet.">
        <title>Organization of the psbE, psbF, orf38, and orf42 gene loci on the Euglena gracilis chloroplast genome.</title>
        <authorList>
            <person name="Cushman J.C."/>
            <person name="Christopher D.A."/>
            <person name="Little M.C."/>
            <person name="Hallick R.B."/>
            <person name="Price C.A."/>
        </authorList>
    </citation>
    <scope>NUCLEOTIDE SEQUENCE [GENOMIC DNA]</scope>
    <source>
        <strain>Z / UTEX 753</strain>
    </source>
</reference>
<reference key="2">
    <citation type="journal article" date="1993" name="Nucleic Acids Res.">
        <title>Complete sequence of Euglena gracilis chloroplast DNA.</title>
        <authorList>
            <person name="Hallick R.B."/>
            <person name="Hong L."/>
            <person name="Drager R.G."/>
            <person name="Favreau M.R."/>
            <person name="Monfort A."/>
            <person name="Orsat B."/>
            <person name="Spielmann A."/>
            <person name="Stutz E."/>
        </authorList>
    </citation>
    <scope>NUCLEOTIDE SEQUENCE [LARGE SCALE GENOMIC DNA]</scope>
    <source>
        <strain>Z / UTEX 753</strain>
    </source>
</reference>
<feature type="chain" id="PRO_0000200390" description="Cytochrome b559 subunit beta">
    <location>
        <begin position="1"/>
        <end position="41"/>
    </location>
</feature>
<feature type="transmembrane region" description="Helical" evidence="1">
    <location>
        <begin position="16"/>
        <end position="32"/>
    </location>
</feature>
<feature type="binding site" description="axial binding residue" evidence="1">
    <location>
        <position position="20"/>
    </location>
    <ligand>
        <name>heme</name>
        <dbReference type="ChEBI" id="CHEBI:30413"/>
        <note>ligand shared with alpha subunit</note>
    </ligand>
    <ligandPart>
        <name>Fe</name>
        <dbReference type="ChEBI" id="CHEBI:18248"/>
    </ligandPart>
</feature>
<name>PSBF_EUGGR</name>
<keyword id="KW-0150">Chloroplast</keyword>
<keyword id="KW-0249">Electron transport</keyword>
<keyword id="KW-0349">Heme</keyword>
<keyword id="KW-0408">Iron</keyword>
<keyword id="KW-0472">Membrane</keyword>
<keyword id="KW-0479">Metal-binding</keyword>
<keyword id="KW-0602">Photosynthesis</keyword>
<keyword id="KW-0604">Photosystem II</keyword>
<keyword id="KW-0934">Plastid</keyword>
<keyword id="KW-0793">Thylakoid</keyword>
<keyword id="KW-0812">Transmembrane</keyword>
<keyword id="KW-1133">Transmembrane helix</keyword>
<keyword id="KW-0813">Transport</keyword>
<organism>
    <name type="scientific">Euglena gracilis</name>
    <dbReference type="NCBI Taxonomy" id="3039"/>
    <lineage>
        <taxon>Eukaryota</taxon>
        <taxon>Discoba</taxon>
        <taxon>Euglenozoa</taxon>
        <taxon>Euglenida</taxon>
        <taxon>Spirocuta</taxon>
        <taxon>Euglenophyceae</taxon>
        <taxon>Euglenales</taxon>
        <taxon>Euglenaceae</taxon>
        <taxon>Euglena</taxon>
    </lineage>
</organism>
<gene>
    <name evidence="1" type="primary">psbF</name>
</gene>
<sequence length="41" mass="4791">MTTNKDTRYPIFTFRWLAVHALAIPTVFFLGSISAMQFIQR</sequence>
<proteinExistence type="inferred from homology"/>